<evidence type="ECO:0000255" key="1">
    <source>
        <dbReference type="HAMAP-Rule" id="MF_00318"/>
    </source>
</evidence>
<gene>
    <name evidence="1" type="primary">eno</name>
    <name type="ordered locus">Syncc9902_2161</name>
</gene>
<protein>
    <recommendedName>
        <fullName evidence="1">Enolase</fullName>
        <ecNumber evidence="1">4.2.1.11</ecNumber>
    </recommendedName>
    <alternativeName>
        <fullName evidence="1">2-phospho-D-glycerate hydro-lyase</fullName>
    </alternativeName>
    <alternativeName>
        <fullName evidence="1">2-phosphoglycerate dehydratase</fullName>
    </alternativeName>
</protein>
<name>ENO_SYNS9</name>
<comment type="function">
    <text evidence="1">Catalyzes the reversible conversion of 2-phosphoglycerate (2-PG) into phosphoenolpyruvate (PEP). It is essential for the degradation of carbohydrates via glycolysis.</text>
</comment>
<comment type="catalytic activity">
    <reaction evidence="1">
        <text>(2R)-2-phosphoglycerate = phosphoenolpyruvate + H2O</text>
        <dbReference type="Rhea" id="RHEA:10164"/>
        <dbReference type="ChEBI" id="CHEBI:15377"/>
        <dbReference type="ChEBI" id="CHEBI:58289"/>
        <dbReference type="ChEBI" id="CHEBI:58702"/>
        <dbReference type="EC" id="4.2.1.11"/>
    </reaction>
</comment>
<comment type="cofactor">
    <cofactor evidence="1">
        <name>Mg(2+)</name>
        <dbReference type="ChEBI" id="CHEBI:18420"/>
    </cofactor>
    <text evidence="1">Binds a second Mg(2+) ion via substrate during catalysis.</text>
</comment>
<comment type="pathway">
    <text evidence="1">Carbohydrate degradation; glycolysis; pyruvate from D-glyceraldehyde 3-phosphate: step 4/5.</text>
</comment>
<comment type="subcellular location">
    <subcellularLocation>
        <location evidence="1">Cytoplasm</location>
    </subcellularLocation>
    <subcellularLocation>
        <location evidence="1">Secreted</location>
    </subcellularLocation>
    <subcellularLocation>
        <location evidence="1">Cell surface</location>
    </subcellularLocation>
    <text evidence="1">Fractions of enolase are present in both the cytoplasm and on the cell surface.</text>
</comment>
<comment type="similarity">
    <text evidence="1">Belongs to the enolase family.</text>
</comment>
<proteinExistence type="inferred from homology"/>
<feature type="chain" id="PRO_0000267123" description="Enolase">
    <location>
        <begin position="1"/>
        <end position="430"/>
    </location>
</feature>
<feature type="active site" description="Proton donor" evidence="1">
    <location>
        <position position="209"/>
    </location>
</feature>
<feature type="active site" description="Proton acceptor" evidence="1">
    <location>
        <position position="338"/>
    </location>
</feature>
<feature type="binding site" evidence="1">
    <location>
        <position position="167"/>
    </location>
    <ligand>
        <name>(2R)-2-phosphoglycerate</name>
        <dbReference type="ChEBI" id="CHEBI:58289"/>
    </ligand>
</feature>
<feature type="binding site" evidence="1">
    <location>
        <position position="245"/>
    </location>
    <ligand>
        <name>Mg(2+)</name>
        <dbReference type="ChEBI" id="CHEBI:18420"/>
    </ligand>
</feature>
<feature type="binding site" evidence="1">
    <location>
        <position position="286"/>
    </location>
    <ligand>
        <name>Mg(2+)</name>
        <dbReference type="ChEBI" id="CHEBI:18420"/>
    </ligand>
</feature>
<feature type="binding site" evidence="1">
    <location>
        <position position="313"/>
    </location>
    <ligand>
        <name>Mg(2+)</name>
        <dbReference type="ChEBI" id="CHEBI:18420"/>
    </ligand>
</feature>
<feature type="binding site" evidence="1">
    <location>
        <position position="338"/>
    </location>
    <ligand>
        <name>(2R)-2-phosphoglycerate</name>
        <dbReference type="ChEBI" id="CHEBI:58289"/>
    </ligand>
</feature>
<feature type="binding site" evidence="1">
    <location>
        <position position="367"/>
    </location>
    <ligand>
        <name>(2R)-2-phosphoglycerate</name>
        <dbReference type="ChEBI" id="CHEBI:58289"/>
    </ligand>
</feature>
<feature type="binding site" evidence="1">
    <location>
        <position position="368"/>
    </location>
    <ligand>
        <name>(2R)-2-phosphoglycerate</name>
        <dbReference type="ChEBI" id="CHEBI:58289"/>
    </ligand>
</feature>
<feature type="binding site" evidence="1">
    <location>
        <position position="389"/>
    </location>
    <ligand>
        <name>(2R)-2-phosphoglycerate</name>
        <dbReference type="ChEBI" id="CHEBI:58289"/>
    </ligand>
</feature>
<organism>
    <name type="scientific">Synechococcus sp. (strain CC9902)</name>
    <dbReference type="NCBI Taxonomy" id="316279"/>
    <lineage>
        <taxon>Bacteria</taxon>
        <taxon>Bacillati</taxon>
        <taxon>Cyanobacteriota</taxon>
        <taxon>Cyanophyceae</taxon>
        <taxon>Synechococcales</taxon>
        <taxon>Synechococcaceae</taxon>
        <taxon>Synechococcus</taxon>
    </lineage>
</organism>
<reference key="1">
    <citation type="submission" date="2005-08" db="EMBL/GenBank/DDBJ databases">
        <title>Complete sequence of Synechococcus sp. CC9902.</title>
        <authorList>
            <person name="Copeland A."/>
            <person name="Lucas S."/>
            <person name="Lapidus A."/>
            <person name="Barry K."/>
            <person name="Detter J.C."/>
            <person name="Glavina T."/>
            <person name="Hammon N."/>
            <person name="Israni S."/>
            <person name="Pitluck S."/>
            <person name="Martinez M."/>
            <person name="Schmutz J."/>
            <person name="Larimer F."/>
            <person name="Land M."/>
            <person name="Kyrpides N."/>
            <person name="Ivanova N."/>
            <person name="Richardson P."/>
        </authorList>
    </citation>
    <scope>NUCLEOTIDE SEQUENCE [LARGE SCALE GENOMIC DNA]</scope>
    <source>
        <strain>CC9902</strain>
    </source>
</reference>
<keyword id="KW-0963">Cytoplasm</keyword>
<keyword id="KW-0324">Glycolysis</keyword>
<keyword id="KW-0456">Lyase</keyword>
<keyword id="KW-0460">Magnesium</keyword>
<keyword id="KW-0479">Metal-binding</keyword>
<keyword id="KW-1185">Reference proteome</keyword>
<keyword id="KW-0964">Secreted</keyword>
<sequence>MIDSLDLVIDTIVAREVLDSRGNPTVEAEVLLEGGAMGRAIVPSGASTGAHEAHELRDGGKRYMGKGVSQAVTHIEERIAPALCGLSALDQAAVDAAMLELDGSDNKSNLGANSILAVSMATARAAANGLGLPLYRYLGGPLANLLPVPLMNVINGGAHAANSLDFQEFMLVPHGAPSFREALRMGTEVFHTLKDLLNAKGMSTSVGDEGGFAPNLGNVEAGEILVEAIQKAGYKPGEQISLALDVASTEFFENGRYAFDGGSYTSAEMVGQLEQLVNQFPIVSIEDGLAEDDWEGWKLLTERLGSKVQLVGDDLFVTNTKRLQQGIDNNTANSILIKVNQIGSLTETLQAIDLAGRSGYTSVISHRSGETEDTTIADLSVATRAGQIKTGSLSRSERVAKYNQLLRIEDELGSQAVYAGAVGQGPRGKA</sequence>
<dbReference type="EC" id="4.2.1.11" evidence="1"/>
<dbReference type="EMBL" id="CP000097">
    <property type="protein sequence ID" value="ABB27119.1"/>
    <property type="molecule type" value="Genomic_DNA"/>
</dbReference>
<dbReference type="RefSeq" id="WP_011360900.1">
    <property type="nucleotide sequence ID" value="NC_007513.1"/>
</dbReference>
<dbReference type="SMR" id="Q3AVW5"/>
<dbReference type="STRING" id="316279.Syncc9902_2161"/>
<dbReference type="KEGG" id="sye:Syncc9902_2161"/>
<dbReference type="eggNOG" id="COG0148">
    <property type="taxonomic scope" value="Bacteria"/>
</dbReference>
<dbReference type="HOGENOM" id="CLU_031223_2_1_3"/>
<dbReference type="OrthoDB" id="9804716at2"/>
<dbReference type="UniPathway" id="UPA00109">
    <property type="reaction ID" value="UER00187"/>
</dbReference>
<dbReference type="Proteomes" id="UP000002712">
    <property type="component" value="Chromosome"/>
</dbReference>
<dbReference type="GO" id="GO:0009986">
    <property type="term" value="C:cell surface"/>
    <property type="evidence" value="ECO:0007669"/>
    <property type="project" value="UniProtKB-SubCell"/>
</dbReference>
<dbReference type="GO" id="GO:0005576">
    <property type="term" value="C:extracellular region"/>
    <property type="evidence" value="ECO:0007669"/>
    <property type="project" value="UniProtKB-SubCell"/>
</dbReference>
<dbReference type="GO" id="GO:0000015">
    <property type="term" value="C:phosphopyruvate hydratase complex"/>
    <property type="evidence" value="ECO:0007669"/>
    <property type="project" value="InterPro"/>
</dbReference>
<dbReference type="GO" id="GO:0000287">
    <property type="term" value="F:magnesium ion binding"/>
    <property type="evidence" value="ECO:0007669"/>
    <property type="project" value="UniProtKB-UniRule"/>
</dbReference>
<dbReference type="GO" id="GO:0004634">
    <property type="term" value="F:phosphopyruvate hydratase activity"/>
    <property type="evidence" value="ECO:0007669"/>
    <property type="project" value="UniProtKB-UniRule"/>
</dbReference>
<dbReference type="GO" id="GO:0006096">
    <property type="term" value="P:glycolytic process"/>
    <property type="evidence" value="ECO:0007669"/>
    <property type="project" value="UniProtKB-UniRule"/>
</dbReference>
<dbReference type="CDD" id="cd03313">
    <property type="entry name" value="enolase"/>
    <property type="match status" value="1"/>
</dbReference>
<dbReference type="FunFam" id="3.20.20.120:FF:000001">
    <property type="entry name" value="Enolase"/>
    <property type="match status" value="1"/>
</dbReference>
<dbReference type="FunFam" id="3.30.390.10:FF:000001">
    <property type="entry name" value="Enolase"/>
    <property type="match status" value="1"/>
</dbReference>
<dbReference type="Gene3D" id="3.20.20.120">
    <property type="entry name" value="Enolase-like C-terminal domain"/>
    <property type="match status" value="1"/>
</dbReference>
<dbReference type="Gene3D" id="3.30.390.10">
    <property type="entry name" value="Enolase-like, N-terminal domain"/>
    <property type="match status" value="1"/>
</dbReference>
<dbReference type="HAMAP" id="MF_00318">
    <property type="entry name" value="Enolase"/>
    <property type="match status" value="1"/>
</dbReference>
<dbReference type="InterPro" id="IPR000941">
    <property type="entry name" value="Enolase"/>
</dbReference>
<dbReference type="InterPro" id="IPR036849">
    <property type="entry name" value="Enolase-like_C_sf"/>
</dbReference>
<dbReference type="InterPro" id="IPR029017">
    <property type="entry name" value="Enolase-like_N"/>
</dbReference>
<dbReference type="InterPro" id="IPR020810">
    <property type="entry name" value="Enolase_C"/>
</dbReference>
<dbReference type="InterPro" id="IPR020809">
    <property type="entry name" value="Enolase_CS"/>
</dbReference>
<dbReference type="InterPro" id="IPR020811">
    <property type="entry name" value="Enolase_N"/>
</dbReference>
<dbReference type="NCBIfam" id="TIGR01060">
    <property type="entry name" value="eno"/>
    <property type="match status" value="1"/>
</dbReference>
<dbReference type="PANTHER" id="PTHR11902">
    <property type="entry name" value="ENOLASE"/>
    <property type="match status" value="1"/>
</dbReference>
<dbReference type="PANTHER" id="PTHR11902:SF1">
    <property type="entry name" value="ENOLASE"/>
    <property type="match status" value="1"/>
</dbReference>
<dbReference type="Pfam" id="PF00113">
    <property type="entry name" value="Enolase_C"/>
    <property type="match status" value="1"/>
</dbReference>
<dbReference type="Pfam" id="PF03952">
    <property type="entry name" value="Enolase_N"/>
    <property type="match status" value="1"/>
</dbReference>
<dbReference type="PIRSF" id="PIRSF001400">
    <property type="entry name" value="Enolase"/>
    <property type="match status" value="1"/>
</dbReference>
<dbReference type="PRINTS" id="PR00148">
    <property type="entry name" value="ENOLASE"/>
</dbReference>
<dbReference type="SFLD" id="SFLDS00001">
    <property type="entry name" value="Enolase"/>
    <property type="match status" value="1"/>
</dbReference>
<dbReference type="SFLD" id="SFLDF00002">
    <property type="entry name" value="enolase"/>
    <property type="match status" value="1"/>
</dbReference>
<dbReference type="SMART" id="SM01192">
    <property type="entry name" value="Enolase_C"/>
    <property type="match status" value="1"/>
</dbReference>
<dbReference type="SMART" id="SM01193">
    <property type="entry name" value="Enolase_N"/>
    <property type="match status" value="1"/>
</dbReference>
<dbReference type="SUPFAM" id="SSF51604">
    <property type="entry name" value="Enolase C-terminal domain-like"/>
    <property type="match status" value="1"/>
</dbReference>
<dbReference type="SUPFAM" id="SSF54826">
    <property type="entry name" value="Enolase N-terminal domain-like"/>
    <property type="match status" value="1"/>
</dbReference>
<dbReference type="PROSITE" id="PS00164">
    <property type="entry name" value="ENOLASE"/>
    <property type="match status" value="1"/>
</dbReference>
<accession>Q3AVW5</accession>